<evidence type="ECO:0000255" key="1">
    <source>
        <dbReference type="HAMAP-Rule" id="MF_01385"/>
    </source>
</evidence>
<sequence>MYSAHCMLPELRLYQLISPSLPVGGFTYSQGLEWAIDKGWVTTATELENWLKSQMLESLTCLELPVLVRIQGYLAANDYAQAQAWCNYLAASRETKELRLEEHQRGIAFVRLLPKLGIALTSELTTMVKTSQLAAFALGINQWQIPLDKALGGYLWSWLENAVVVGIKLVPLGQSAGQQLLMSLAENIPAAVEKALLITDQEVGSFTPAQVMASCRHEHQYTRLFRS</sequence>
<reference key="1">
    <citation type="submission" date="2008-01" db="EMBL/GenBank/DDBJ databases">
        <title>Complete sequence of Shewanella halifaxensis HAW-EB4.</title>
        <authorList>
            <consortium name="US DOE Joint Genome Institute"/>
            <person name="Copeland A."/>
            <person name="Lucas S."/>
            <person name="Lapidus A."/>
            <person name="Glavina del Rio T."/>
            <person name="Dalin E."/>
            <person name="Tice H."/>
            <person name="Bruce D."/>
            <person name="Goodwin L."/>
            <person name="Pitluck S."/>
            <person name="Sims D."/>
            <person name="Brettin T."/>
            <person name="Detter J.C."/>
            <person name="Han C."/>
            <person name="Kuske C.R."/>
            <person name="Schmutz J."/>
            <person name="Larimer F."/>
            <person name="Land M."/>
            <person name="Hauser L."/>
            <person name="Kyrpides N."/>
            <person name="Kim E."/>
            <person name="Zhao J.-S."/>
            <person name="Richardson P."/>
        </authorList>
    </citation>
    <scope>NUCLEOTIDE SEQUENCE [LARGE SCALE GENOMIC DNA]</scope>
    <source>
        <strain>HAW-EB4</strain>
    </source>
</reference>
<comment type="function">
    <text evidence="1">Required for maturation of urease via the functional incorporation of the urease nickel metallocenter.</text>
</comment>
<comment type="subunit">
    <text evidence="1">UreD, UreF and UreG form a complex that acts as a GTP-hydrolysis-dependent molecular chaperone, activating the urease apoprotein by helping to assemble the nickel containing metallocenter of UreC. The UreE protein probably delivers the nickel.</text>
</comment>
<comment type="subcellular location">
    <subcellularLocation>
        <location evidence="1">Cytoplasm</location>
    </subcellularLocation>
</comment>
<comment type="similarity">
    <text evidence="1">Belongs to the UreF family.</text>
</comment>
<accession>B0TT73</accession>
<gene>
    <name evidence="1" type="primary">ureF</name>
    <name type="ordered locus">Shal_3469</name>
</gene>
<proteinExistence type="inferred from homology"/>
<feature type="chain" id="PRO_0000344175" description="Urease accessory protein UreF">
    <location>
        <begin position="1"/>
        <end position="227"/>
    </location>
</feature>
<keyword id="KW-0143">Chaperone</keyword>
<keyword id="KW-0963">Cytoplasm</keyword>
<keyword id="KW-0996">Nickel insertion</keyword>
<organism>
    <name type="scientific">Shewanella halifaxensis (strain HAW-EB4)</name>
    <dbReference type="NCBI Taxonomy" id="458817"/>
    <lineage>
        <taxon>Bacteria</taxon>
        <taxon>Pseudomonadati</taxon>
        <taxon>Pseudomonadota</taxon>
        <taxon>Gammaproteobacteria</taxon>
        <taxon>Alteromonadales</taxon>
        <taxon>Shewanellaceae</taxon>
        <taxon>Shewanella</taxon>
    </lineage>
</organism>
<name>UREF_SHEHH</name>
<protein>
    <recommendedName>
        <fullName evidence="1">Urease accessory protein UreF</fullName>
    </recommendedName>
</protein>
<dbReference type="EMBL" id="CP000931">
    <property type="protein sequence ID" value="ABZ78014.1"/>
    <property type="molecule type" value="Genomic_DNA"/>
</dbReference>
<dbReference type="RefSeq" id="WP_012278534.1">
    <property type="nucleotide sequence ID" value="NC_010334.1"/>
</dbReference>
<dbReference type="SMR" id="B0TT73"/>
<dbReference type="STRING" id="458817.Shal_3469"/>
<dbReference type="KEGG" id="shl:Shal_3469"/>
<dbReference type="eggNOG" id="COG0830">
    <property type="taxonomic scope" value="Bacteria"/>
</dbReference>
<dbReference type="HOGENOM" id="CLU_049215_2_1_6"/>
<dbReference type="OrthoDB" id="9798772at2"/>
<dbReference type="Proteomes" id="UP000001317">
    <property type="component" value="Chromosome"/>
</dbReference>
<dbReference type="GO" id="GO:0005737">
    <property type="term" value="C:cytoplasm"/>
    <property type="evidence" value="ECO:0007669"/>
    <property type="project" value="UniProtKB-SubCell"/>
</dbReference>
<dbReference type="GO" id="GO:0016151">
    <property type="term" value="F:nickel cation binding"/>
    <property type="evidence" value="ECO:0007669"/>
    <property type="project" value="UniProtKB-UniRule"/>
</dbReference>
<dbReference type="Gene3D" id="1.10.4190.10">
    <property type="entry name" value="Urease accessory protein UreF"/>
    <property type="match status" value="1"/>
</dbReference>
<dbReference type="HAMAP" id="MF_01385">
    <property type="entry name" value="UreF"/>
    <property type="match status" value="1"/>
</dbReference>
<dbReference type="InterPro" id="IPR002639">
    <property type="entry name" value="UreF"/>
</dbReference>
<dbReference type="InterPro" id="IPR038277">
    <property type="entry name" value="UreF_sf"/>
</dbReference>
<dbReference type="PANTHER" id="PTHR33620">
    <property type="entry name" value="UREASE ACCESSORY PROTEIN F"/>
    <property type="match status" value="1"/>
</dbReference>
<dbReference type="PANTHER" id="PTHR33620:SF1">
    <property type="entry name" value="UREASE ACCESSORY PROTEIN F"/>
    <property type="match status" value="1"/>
</dbReference>
<dbReference type="Pfam" id="PF01730">
    <property type="entry name" value="UreF"/>
    <property type="match status" value="1"/>
</dbReference>
<dbReference type="PIRSF" id="PIRSF009467">
    <property type="entry name" value="Ureas_acces_UreF"/>
    <property type="match status" value="1"/>
</dbReference>